<accession>Q5L8X6</accession>
<sequence length="362" mass="41293">MKESKKRVLVGMSGGIDSTATCLMLQEQGYEIVGVTMRVWGDEPQDARELAARMGIEHYVADERVPFKDTIVKNFIDEYRQGRTPNPCVMCNPLFKFRMLIEWADKLGCDWIATGHYSRLEERNGHIYIVAGDDDKKDQSYFLWRLGQDVLRRCIFPLGNYTKQTVRDYLREKGYEAKSKEGESMEVCFIKGDYRDFLREQCPELDAEVGPGWFVSSEGVKLGQHKGFPYYTIGQRKGLEIALGKPAYVLKINPQKNTVMLGDAGQLRAEYMVAEQDNIVDEDELFACPDLAVRIRYRSRPIPCRVKRLEDGRLLVRFLAEASAIAPGQSAVFYEGRRVLGGAFIASQRGIGLVIEQNKDWK</sequence>
<evidence type="ECO:0000255" key="1">
    <source>
        <dbReference type="HAMAP-Rule" id="MF_00144"/>
    </source>
</evidence>
<feature type="chain" id="PRO_0000349526" description="tRNA-specific 2-thiouridylase MnmA 3">
    <location>
        <begin position="1"/>
        <end position="362"/>
    </location>
</feature>
<feature type="region of interest" description="Interaction with tRNA" evidence="1">
    <location>
        <begin position="137"/>
        <end position="139"/>
    </location>
</feature>
<feature type="region of interest" description="Interaction with tRNA" evidence="1">
    <location>
        <begin position="296"/>
        <end position="297"/>
    </location>
</feature>
<feature type="active site" description="Nucleophile" evidence="1">
    <location>
        <position position="91"/>
    </location>
</feature>
<feature type="active site" description="Cysteine persulfide intermediate" evidence="1">
    <location>
        <position position="188"/>
    </location>
</feature>
<feature type="binding site" evidence="1">
    <location>
        <begin position="11"/>
        <end position="18"/>
    </location>
    <ligand>
        <name>ATP</name>
        <dbReference type="ChEBI" id="CHEBI:30616"/>
    </ligand>
</feature>
<feature type="binding site" evidence="1">
    <location>
        <position position="37"/>
    </location>
    <ligand>
        <name>ATP</name>
        <dbReference type="ChEBI" id="CHEBI:30616"/>
    </ligand>
</feature>
<feature type="binding site" evidence="1">
    <location>
        <position position="115"/>
    </location>
    <ligand>
        <name>ATP</name>
        <dbReference type="ChEBI" id="CHEBI:30616"/>
    </ligand>
</feature>
<feature type="site" description="Interaction with tRNA" evidence="1">
    <location>
        <position position="116"/>
    </location>
</feature>
<feature type="site" description="Interaction with tRNA" evidence="1">
    <location>
        <position position="329"/>
    </location>
</feature>
<feature type="disulfide bond" description="Alternate" evidence="1">
    <location>
        <begin position="91"/>
        <end position="188"/>
    </location>
</feature>
<proteinExistence type="inferred from homology"/>
<comment type="function">
    <text evidence="1">Catalyzes the 2-thiolation of uridine at the wobble position (U34) of tRNA, leading to the formation of s(2)U34.</text>
</comment>
<comment type="catalytic activity">
    <reaction evidence="1">
        <text>S-sulfanyl-L-cysteinyl-[protein] + uridine(34) in tRNA + AH2 + ATP = 2-thiouridine(34) in tRNA + L-cysteinyl-[protein] + A + AMP + diphosphate + H(+)</text>
        <dbReference type="Rhea" id="RHEA:47032"/>
        <dbReference type="Rhea" id="RHEA-COMP:10131"/>
        <dbReference type="Rhea" id="RHEA-COMP:11726"/>
        <dbReference type="Rhea" id="RHEA-COMP:11727"/>
        <dbReference type="Rhea" id="RHEA-COMP:11728"/>
        <dbReference type="ChEBI" id="CHEBI:13193"/>
        <dbReference type="ChEBI" id="CHEBI:15378"/>
        <dbReference type="ChEBI" id="CHEBI:17499"/>
        <dbReference type="ChEBI" id="CHEBI:29950"/>
        <dbReference type="ChEBI" id="CHEBI:30616"/>
        <dbReference type="ChEBI" id="CHEBI:33019"/>
        <dbReference type="ChEBI" id="CHEBI:61963"/>
        <dbReference type="ChEBI" id="CHEBI:65315"/>
        <dbReference type="ChEBI" id="CHEBI:87170"/>
        <dbReference type="ChEBI" id="CHEBI:456215"/>
        <dbReference type="EC" id="2.8.1.13"/>
    </reaction>
</comment>
<comment type="subcellular location">
    <subcellularLocation>
        <location evidence="1">Cytoplasm</location>
    </subcellularLocation>
</comment>
<comment type="similarity">
    <text evidence="1">Belongs to the MnmA/TRMU family.</text>
</comment>
<dbReference type="EC" id="2.8.1.13" evidence="1"/>
<dbReference type="EMBL" id="CR626927">
    <property type="protein sequence ID" value="CAH09456.1"/>
    <property type="molecule type" value="Genomic_DNA"/>
</dbReference>
<dbReference type="SMR" id="Q5L8X6"/>
<dbReference type="PaxDb" id="272559-BF9343_3675"/>
<dbReference type="KEGG" id="bfs:BF9343_3675"/>
<dbReference type="eggNOG" id="COG0482">
    <property type="taxonomic scope" value="Bacteria"/>
</dbReference>
<dbReference type="HOGENOM" id="CLU_035188_0_0_10"/>
<dbReference type="Proteomes" id="UP000006731">
    <property type="component" value="Chromosome"/>
</dbReference>
<dbReference type="GO" id="GO:0005737">
    <property type="term" value="C:cytoplasm"/>
    <property type="evidence" value="ECO:0007669"/>
    <property type="project" value="UniProtKB-SubCell"/>
</dbReference>
<dbReference type="GO" id="GO:0005524">
    <property type="term" value="F:ATP binding"/>
    <property type="evidence" value="ECO:0007669"/>
    <property type="project" value="UniProtKB-KW"/>
</dbReference>
<dbReference type="GO" id="GO:0000049">
    <property type="term" value="F:tRNA binding"/>
    <property type="evidence" value="ECO:0007669"/>
    <property type="project" value="UniProtKB-KW"/>
</dbReference>
<dbReference type="GO" id="GO:0103016">
    <property type="term" value="F:tRNA-uridine 2-sulfurtransferase activity"/>
    <property type="evidence" value="ECO:0007669"/>
    <property type="project" value="UniProtKB-EC"/>
</dbReference>
<dbReference type="GO" id="GO:0002143">
    <property type="term" value="P:tRNA wobble position uridine thiolation"/>
    <property type="evidence" value="ECO:0007669"/>
    <property type="project" value="TreeGrafter"/>
</dbReference>
<dbReference type="CDD" id="cd01998">
    <property type="entry name" value="MnmA_TRMU-like"/>
    <property type="match status" value="1"/>
</dbReference>
<dbReference type="FunFam" id="2.30.30.280:FF:000001">
    <property type="entry name" value="tRNA-specific 2-thiouridylase MnmA"/>
    <property type="match status" value="1"/>
</dbReference>
<dbReference type="FunFam" id="2.40.30.10:FF:000127">
    <property type="entry name" value="tRNA-specific 2-thiouridylase MnmA"/>
    <property type="match status" value="1"/>
</dbReference>
<dbReference type="FunFam" id="3.40.50.620:FF:000210">
    <property type="entry name" value="tRNA-specific 2-thiouridylase MnmA"/>
    <property type="match status" value="1"/>
</dbReference>
<dbReference type="Gene3D" id="2.30.30.280">
    <property type="entry name" value="Adenine nucleotide alpha hydrolases-like domains"/>
    <property type="match status" value="1"/>
</dbReference>
<dbReference type="Gene3D" id="3.40.50.620">
    <property type="entry name" value="HUPs"/>
    <property type="match status" value="1"/>
</dbReference>
<dbReference type="Gene3D" id="2.40.30.10">
    <property type="entry name" value="Translation factors"/>
    <property type="match status" value="1"/>
</dbReference>
<dbReference type="HAMAP" id="MF_00144">
    <property type="entry name" value="tRNA_thiouridyl_MnmA"/>
    <property type="match status" value="1"/>
</dbReference>
<dbReference type="InterPro" id="IPR004506">
    <property type="entry name" value="MnmA-like"/>
</dbReference>
<dbReference type="InterPro" id="IPR046885">
    <property type="entry name" value="MnmA-like_C"/>
</dbReference>
<dbReference type="InterPro" id="IPR046884">
    <property type="entry name" value="MnmA-like_central"/>
</dbReference>
<dbReference type="InterPro" id="IPR023382">
    <property type="entry name" value="MnmA-like_central_sf"/>
</dbReference>
<dbReference type="InterPro" id="IPR014729">
    <property type="entry name" value="Rossmann-like_a/b/a_fold"/>
</dbReference>
<dbReference type="NCBIfam" id="NF001138">
    <property type="entry name" value="PRK00143.1"/>
    <property type="match status" value="1"/>
</dbReference>
<dbReference type="NCBIfam" id="NF011258">
    <property type="entry name" value="PRK14664.1"/>
    <property type="match status" value="1"/>
</dbReference>
<dbReference type="NCBIfam" id="TIGR00420">
    <property type="entry name" value="trmU"/>
    <property type="match status" value="1"/>
</dbReference>
<dbReference type="PANTHER" id="PTHR11933:SF5">
    <property type="entry name" value="MITOCHONDRIAL TRNA-SPECIFIC 2-THIOURIDYLASE 1"/>
    <property type="match status" value="1"/>
</dbReference>
<dbReference type="PANTHER" id="PTHR11933">
    <property type="entry name" value="TRNA 5-METHYLAMINOMETHYL-2-THIOURIDYLATE -METHYLTRANSFERASE"/>
    <property type="match status" value="1"/>
</dbReference>
<dbReference type="Pfam" id="PF03054">
    <property type="entry name" value="tRNA_Me_trans"/>
    <property type="match status" value="1"/>
</dbReference>
<dbReference type="Pfam" id="PF20258">
    <property type="entry name" value="tRNA_Me_trans_C"/>
    <property type="match status" value="1"/>
</dbReference>
<dbReference type="Pfam" id="PF20259">
    <property type="entry name" value="tRNA_Me_trans_M"/>
    <property type="match status" value="1"/>
</dbReference>
<dbReference type="SUPFAM" id="SSF52402">
    <property type="entry name" value="Adenine nucleotide alpha hydrolases-like"/>
    <property type="match status" value="1"/>
</dbReference>
<organism>
    <name type="scientific">Bacteroides fragilis (strain ATCC 25285 / DSM 2151 / CCUG 4856 / JCM 11019 / LMG 10263 / NCTC 9343 / Onslow / VPI 2553 / EN-2)</name>
    <dbReference type="NCBI Taxonomy" id="272559"/>
    <lineage>
        <taxon>Bacteria</taxon>
        <taxon>Pseudomonadati</taxon>
        <taxon>Bacteroidota</taxon>
        <taxon>Bacteroidia</taxon>
        <taxon>Bacteroidales</taxon>
        <taxon>Bacteroidaceae</taxon>
        <taxon>Bacteroides</taxon>
    </lineage>
</organism>
<protein>
    <recommendedName>
        <fullName evidence="1">tRNA-specific 2-thiouridylase MnmA 3</fullName>
        <ecNumber evidence="1">2.8.1.13</ecNumber>
    </recommendedName>
</protein>
<name>MNMA3_BACFN</name>
<keyword id="KW-0067">ATP-binding</keyword>
<keyword id="KW-0963">Cytoplasm</keyword>
<keyword id="KW-1015">Disulfide bond</keyword>
<keyword id="KW-0547">Nucleotide-binding</keyword>
<keyword id="KW-0694">RNA-binding</keyword>
<keyword id="KW-0808">Transferase</keyword>
<keyword id="KW-0819">tRNA processing</keyword>
<keyword id="KW-0820">tRNA-binding</keyword>
<reference key="1">
    <citation type="journal article" date="2005" name="Science">
        <title>Extensive DNA inversions in the B. fragilis genome control variable gene expression.</title>
        <authorList>
            <person name="Cerdeno-Tarraga A.-M."/>
            <person name="Patrick S."/>
            <person name="Crossman L.C."/>
            <person name="Blakely G."/>
            <person name="Abratt V."/>
            <person name="Lennard N."/>
            <person name="Poxton I."/>
            <person name="Duerden B."/>
            <person name="Harris B."/>
            <person name="Quail M.A."/>
            <person name="Barron A."/>
            <person name="Clark L."/>
            <person name="Corton C."/>
            <person name="Doggett J."/>
            <person name="Holden M.T.G."/>
            <person name="Larke N."/>
            <person name="Line A."/>
            <person name="Lord A."/>
            <person name="Norbertczak H."/>
            <person name="Ormond D."/>
            <person name="Price C."/>
            <person name="Rabbinowitsch E."/>
            <person name="Woodward J."/>
            <person name="Barrell B.G."/>
            <person name="Parkhill J."/>
        </authorList>
    </citation>
    <scope>NUCLEOTIDE SEQUENCE [LARGE SCALE GENOMIC DNA]</scope>
    <source>
        <strain>ATCC 25285 / DSM 2151 / CCUG 4856 / JCM 11019 / LMG 10263 / NCTC 9343 / Onslow / VPI 2553 / EN-2</strain>
    </source>
</reference>
<gene>
    <name evidence="1" type="primary">mnmA3</name>
    <name type="ordered locus">BF3776</name>
</gene>